<sequence>MGLTSSLRFHRQNNKTFLGIFMILVLSCIPGRTNLCSNHSVSTPKELPSSNPSDIRSSLVSLDLEGYISFDDVHNVAKDFGNRYQLPPLAILHPRSVFDISSMMKHIVHLGSTSNLTVAARGHGHSLQGQALAHQGVVIKMESLRSPDIRIYKGKQPYVDVSGGEIWINILRETLKYGLSPKSWTDYLHLTVGGTLSNAGISGQAFKHGPQINNVYQLEIVTGKGEVVTCSEKRNSELFFSVLGGLGQFGIITRARISLEPAPHMVKWIRVLYSDFSAFSRDQEYLISKEKTFDYVEGFVIINRTDLLNNWRSSFSPNDSTQASRFKSDGKTLYCLEVVKYFNPEEASSMDQETGKLLSELNYIPSTLFSSEVPYIEFLDRVHIAERKLRAKGLWEVPHPWLNLLIPKSSIYQFATEVFNNILTSNNNGPILIYPVNQSKWKKHTSLITPNEDIFYLVAFLPSAVPNSSGKNDLEYLLKQNQRVMNFCAAANLNVKQYLPHYETQKEWKSHFGKRWETFAQRKQAYDPLAILAPGQRIFQKTTGKLSPIQLAKSKATGSPQRYHYASILPKPRTV</sequence>
<dbReference type="EC" id="1.5.99.12" evidence="7"/>
<dbReference type="EMBL" id="AC002510">
    <property type="protein sequence ID" value="AAB84333.1"/>
    <property type="molecule type" value="Genomic_DNA"/>
</dbReference>
<dbReference type="EMBL" id="CP002685">
    <property type="protein sequence ID" value="AEC09992.1"/>
    <property type="molecule type" value="Genomic_DNA"/>
</dbReference>
<dbReference type="EMBL" id="AK226615">
    <property type="status" value="NOT_ANNOTATED_CDS"/>
    <property type="molecule type" value="mRNA"/>
</dbReference>
<dbReference type="PIR" id="T00807">
    <property type="entry name" value="T00807"/>
</dbReference>
<dbReference type="RefSeq" id="NP_001318403.1">
    <property type="nucleotide sequence ID" value="NM_001336920.1"/>
</dbReference>
<dbReference type="SMR" id="O22213"/>
<dbReference type="STRING" id="3702.O22213"/>
<dbReference type="GlyCosmos" id="O22213">
    <property type="glycosylation" value="7 sites, No reported glycans"/>
</dbReference>
<dbReference type="GlyGen" id="O22213">
    <property type="glycosylation" value="7 sites"/>
</dbReference>
<dbReference type="iPTMnet" id="O22213"/>
<dbReference type="PaxDb" id="3702-AT2G41510.1"/>
<dbReference type="ProteomicsDB" id="222092"/>
<dbReference type="EnsemblPlants" id="AT2G41510.1">
    <property type="protein sequence ID" value="AT2G41510.1"/>
    <property type="gene ID" value="AT2G41510"/>
</dbReference>
<dbReference type="GeneID" id="818749"/>
<dbReference type="Gramene" id="AT2G41510.1">
    <property type="protein sequence ID" value="AT2G41510.1"/>
    <property type="gene ID" value="AT2G41510"/>
</dbReference>
<dbReference type="KEGG" id="ath:AT2G41510"/>
<dbReference type="Araport" id="AT2G41510"/>
<dbReference type="TAIR" id="AT2G41510">
    <property type="gene designation" value="CKX1"/>
</dbReference>
<dbReference type="eggNOG" id="KOG1231">
    <property type="taxonomic scope" value="Eukaryota"/>
</dbReference>
<dbReference type="HOGENOM" id="CLU_024955_1_0_1"/>
<dbReference type="InParanoid" id="O22213"/>
<dbReference type="PhylomeDB" id="O22213"/>
<dbReference type="BioCyc" id="MetaCyc:AT2G41510-MONOMER"/>
<dbReference type="BRENDA" id="1.5.99.12">
    <property type="organism ID" value="399"/>
</dbReference>
<dbReference type="SABIO-RK" id="O22213"/>
<dbReference type="PRO" id="PR:O22213"/>
<dbReference type="Proteomes" id="UP000006548">
    <property type="component" value="Chromosome 2"/>
</dbReference>
<dbReference type="ExpressionAtlas" id="O22213">
    <property type="expression patterns" value="baseline and differential"/>
</dbReference>
<dbReference type="GO" id="GO:0005773">
    <property type="term" value="C:vacuole"/>
    <property type="evidence" value="ECO:0000314"/>
    <property type="project" value="TAIR"/>
</dbReference>
<dbReference type="GO" id="GO:0019139">
    <property type="term" value="F:cytokinin dehydrogenase activity"/>
    <property type="evidence" value="ECO:0000314"/>
    <property type="project" value="TAIR"/>
</dbReference>
<dbReference type="GO" id="GO:0071949">
    <property type="term" value="F:FAD binding"/>
    <property type="evidence" value="ECO:0007669"/>
    <property type="project" value="InterPro"/>
</dbReference>
<dbReference type="GO" id="GO:0009823">
    <property type="term" value="P:cytokinin catabolic process"/>
    <property type="evidence" value="ECO:0000314"/>
    <property type="project" value="TAIR"/>
</dbReference>
<dbReference type="GO" id="GO:0048507">
    <property type="term" value="P:meristem development"/>
    <property type="evidence" value="ECO:0000315"/>
    <property type="project" value="TAIR"/>
</dbReference>
<dbReference type="FunFam" id="3.30.465.10:FF:000021">
    <property type="entry name" value="Cytokinin dehydrogenase 1"/>
    <property type="match status" value="1"/>
</dbReference>
<dbReference type="FunFam" id="3.40.462.10:FF:000001">
    <property type="entry name" value="Cytokinin dehydrogenase 2"/>
    <property type="match status" value="1"/>
</dbReference>
<dbReference type="Gene3D" id="3.30.465.10">
    <property type="match status" value="1"/>
</dbReference>
<dbReference type="Gene3D" id="3.40.462.10">
    <property type="entry name" value="FAD-linked oxidases, C-terminal domain"/>
    <property type="match status" value="1"/>
</dbReference>
<dbReference type="Gene3D" id="3.30.43.10">
    <property type="entry name" value="Uridine Diphospho-n-acetylenolpyruvylglucosamine Reductase, domain 2"/>
    <property type="match status" value="1"/>
</dbReference>
<dbReference type="InterPro" id="IPR016170">
    <property type="entry name" value="Cytok_DH_C_sf"/>
</dbReference>
<dbReference type="InterPro" id="IPR015345">
    <property type="entry name" value="Cytokinin_DH_FAD/cytokin-bd"/>
</dbReference>
<dbReference type="InterPro" id="IPR016166">
    <property type="entry name" value="FAD-bd_PCMH"/>
</dbReference>
<dbReference type="InterPro" id="IPR036318">
    <property type="entry name" value="FAD-bd_PCMH-like_sf"/>
</dbReference>
<dbReference type="InterPro" id="IPR016167">
    <property type="entry name" value="FAD-bd_PCMH_sub1"/>
</dbReference>
<dbReference type="InterPro" id="IPR016169">
    <property type="entry name" value="FAD-bd_PCMH_sub2"/>
</dbReference>
<dbReference type="InterPro" id="IPR016164">
    <property type="entry name" value="FAD-linked_Oxase-like_C"/>
</dbReference>
<dbReference type="InterPro" id="IPR050432">
    <property type="entry name" value="FAD-linked_Oxidoreductases_BP"/>
</dbReference>
<dbReference type="InterPro" id="IPR006094">
    <property type="entry name" value="Oxid_FAD_bind_N"/>
</dbReference>
<dbReference type="InterPro" id="IPR006093">
    <property type="entry name" value="Oxy_OxRdtase_FAD_BS"/>
</dbReference>
<dbReference type="PANTHER" id="PTHR13878:SF114">
    <property type="entry name" value="CYTOKININ DEHYDROGENASE 1"/>
    <property type="match status" value="1"/>
</dbReference>
<dbReference type="PANTHER" id="PTHR13878">
    <property type="entry name" value="GULONOLACTONE OXIDASE"/>
    <property type="match status" value="1"/>
</dbReference>
<dbReference type="Pfam" id="PF09265">
    <property type="entry name" value="Cytokin-bind"/>
    <property type="match status" value="1"/>
</dbReference>
<dbReference type="Pfam" id="PF01565">
    <property type="entry name" value="FAD_binding_4"/>
    <property type="match status" value="1"/>
</dbReference>
<dbReference type="SUPFAM" id="SSF56176">
    <property type="entry name" value="FAD-binding/transporter-associated domain-like"/>
    <property type="match status" value="1"/>
</dbReference>
<dbReference type="SUPFAM" id="SSF55103">
    <property type="entry name" value="FAD-linked oxidases, C-terminal domain"/>
    <property type="match status" value="1"/>
</dbReference>
<dbReference type="PROSITE" id="PS51387">
    <property type="entry name" value="FAD_PCMH"/>
    <property type="match status" value="1"/>
</dbReference>
<dbReference type="PROSITE" id="PS00862">
    <property type="entry name" value="OX2_COVAL_FAD"/>
    <property type="match status" value="1"/>
</dbReference>
<accession>O22213</accession>
<keyword id="KW-0274">FAD</keyword>
<keyword id="KW-0285">Flavoprotein</keyword>
<keyword id="KW-0325">Glycoprotein</keyword>
<keyword id="KW-0560">Oxidoreductase</keyword>
<keyword id="KW-1185">Reference proteome</keyword>
<keyword id="KW-0732">Signal</keyword>
<keyword id="KW-0926">Vacuole</keyword>
<proteinExistence type="evidence at protein level"/>
<organism>
    <name type="scientific">Arabidopsis thaliana</name>
    <name type="common">Mouse-ear cress</name>
    <dbReference type="NCBI Taxonomy" id="3702"/>
    <lineage>
        <taxon>Eukaryota</taxon>
        <taxon>Viridiplantae</taxon>
        <taxon>Streptophyta</taxon>
        <taxon>Embryophyta</taxon>
        <taxon>Tracheophyta</taxon>
        <taxon>Spermatophyta</taxon>
        <taxon>Magnoliopsida</taxon>
        <taxon>eudicotyledons</taxon>
        <taxon>Gunneridae</taxon>
        <taxon>Pentapetalae</taxon>
        <taxon>rosids</taxon>
        <taxon>malvids</taxon>
        <taxon>Brassicales</taxon>
        <taxon>Brassicaceae</taxon>
        <taxon>Camelineae</taxon>
        <taxon>Arabidopsis</taxon>
    </lineage>
</organism>
<feature type="signal peptide" evidence="3">
    <location>
        <begin position="1"/>
        <end position="31"/>
    </location>
</feature>
<feature type="chain" id="PRO_0000020418" description="Cytokinin dehydrogenase 1">
    <location>
        <begin position="32"/>
        <end position="575"/>
    </location>
</feature>
<feature type="domain" description="FAD-binding PCMH-type" evidence="4">
    <location>
        <begin position="84"/>
        <end position="262"/>
    </location>
</feature>
<feature type="binding site" evidence="1">
    <location>
        <position position="120"/>
    </location>
    <ligand>
        <name>FAD</name>
        <dbReference type="ChEBI" id="CHEBI:57692"/>
    </ligand>
</feature>
<feature type="binding site" evidence="2">
    <location>
        <position position="122"/>
    </location>
    <ligand>
        <name>FAD</name>
        <dbReference type="ChEBI" id="CHEBI:57692"/>
    </ligand>
</feature>
<feature type="binding site" evidence="2">
    <location>
        <position position="124"/>
    </location>
    <ligand>
        <name>FAD</name>
        <dbReference type="ChEBI" id="CHEBI:57692"/>
    </ligand>
</feature>
<feature type="binding site" evidence="2">
    <location>
        <position position="126"/>
    </location>
    <ligand>
        <name>FAD</name>
        <dbReference type="ChEBI" id="CHEBI:57692"/>
    </ligand>
</feature>
<feature type="binding site" evidence="2">
    <location>
        <position position="130"/>
    </location>
    <ligand>
        <name>FAD</name>
        <dbReference type="ChEBI" id="CHEBI:57692"/>
    </ligand>
</feature>
<feature type="binding site" evidence="2">
    <location>
        <position position="186"/>
    </location>
    <ligand>
        <name>FAD</name>
        <dbReference type="ChEBI" id="CHEBI:57692"/>
    </ligand>
</feature>
<feature type="binding site" evidence="2">
    <location>
        <position position="191"/>
    </location>
    <ligand>
        <name>FAD</name>
        <dbReference type="ChEBI" id="CHEBI:57692"/>
    </ligand>
</feature>
<feature type="binding site" evidence="2">
    <location>
        <position position="197"/>
    </location>
    <ligand>
        <name>FAD</name>
        <dbReference type="ChEBI" id="CHEBI:57692"/>
    </ligand>
</feature>
<feature type="binding site" evidence="2">
    <location>
        <position position="201"/>
    </location>
    <ligand>
        <name>FAD</name>
        <dbReference type="ChEBI" id="CHEBI:57692"/>
    </ligand>
</feature>
<feature type="binding site" evidence="2">
    <location>
        <position position="252"/>
    </location>
    <ligand>
        <name>FAD</name>
        <dbReference type="ChEBI" id="CHEBI:57692"/>
    </ligand>
</feature>
<feature type="binding site" evidence="2">
    <location>
        <position position="498"/>
    </location>
    <ligand>
        <name>FAD</name>
        <dbReference type="ChEBI" id="CHEBI:57692"/>
    </ligand>
</feature>
<feature type="binding site" evidence="2">
    <location>
        <position position="536"/>
    </location>
    <ligand>
        <name>FAD</name>
        <dbReference type="ChEBI" id="CHEBI:57692"/>
    </ligand>
</feature>
<feature type="modified residue" description="Pros-8alpha-FAD histidine" evidence="2">
    <location>
        <position position="125"/>
    </location>
</feature>
<feature type="glycosylation site" description="N-linked (GlcNAc...) asparagine" evidence="3">
    <location>
        <position position="14"/>
    </location>
</feature>
<feature type="glycosylation site" description="N-linked (GlcNAc...) asparagine" evidence="3">
    <location>
        <position position="38"/>
    </location>
</feature>
<feature type="glycosylation site" description="N-linked (GlcNAc...) asparagine" evidence="3">
    <location>
        <position position="115"/>
    </location>
</feature>
<feature type="glycosylation site" description="N-linked (GlcNAc...) asparagine" evidence="3">
    <location>
        <position position="303"/>
    </location>
</feature>
<feature type="glycosylation site" description="N-linked (GlcNAc...) asparagine" evidence="3">
    <location>
        <position position="318"/>
    </location>
</feature>
<feature type="glycosylation site" description="N-linked (GlcNAc...) asparagine" evidence="3">
    <location>
        <position position="437"/>
    </location>
</feature>
<feature type="glycosylation site" description="N-linked (GlcNAc...) asparagine" evidence="3">
    <location>
        <position position="467"/>
    </location>
</feature>
<feature type="sequence conflict" description="In Ref. 3; AK226615." evidence="10" ref="3">
    <original>I</original>
    <variation>V</variation>
    <location>
        <position position="411"/>
    </location>
</feature>
<evidence type="ECO:0000250" key="1">
    <source>
        <dbReference type="UniProtKB" id="Q9FUJ1"/>
    </source>
</evidence>
<evidence type="ECO:0000250" key="2">
    <source>
        <dbReference type="UniProtKB" id="Q9T0N8"/>
    </source>
</evidence>
<evidence type="ECO:0000255" key="3"/>
<evidence type="ECO:0000255" key="4">
    <source>
        <dbReference type="PROSITE-ProRule" id="PRU00718"/>
    </source>
</evidence>
<evidence type="ECO:0000269" key="5">
    <source>
    </source>
</evidence>
<evidence type="ECO:0000269" key="6">
    <source>
    </source>
</evidence>
<evidence type="ECO:0000269" key="7">
    <source>
    </source>
</evidence>
<evidence type="ECO:0000269" key="8">
    <source>
    </source>
</evidence>
<evidence type="ECO:0000269" key="9">
    <source>
    </source>
</evidence>
<evidence type="ECO:0000305" key="10"/>
<protein>
    <recommendedName>
        <fullName>Cytokinin dehydrogenase 1</fullName>
        <ecNumber evidence="7">1.5.99.12</ecNumber>
    </recommendedName>
    <alternativeName>
        <fullName>Cytokinin oxidase 1</fullName>
        <shortName>AtCKX1</shortName>
        <shortName>CKO 1</shortName>
    </alternativeName>
</protein>
<reference key="1">
    <citation type="journal article" date="1999" name="Nature">
        <title>Sequence and analysis of chromosome 2 of the plant Arabidopsis thaliana.</title>
        <authorList>
            <person name="Lin X."/>
            <person name="Kaul S."/>
            <person name="Rounsley S.D."/>
            <person name="Shea T.P."/>
            <person name="Benito M.-I."/>
            <person name="Town C.D."/>
            <person name="Fujii C.Y."/>
            <person name="Mason T.M."/>
            <person name="Bowman C.L."/>
            <person name="Barnstead M.E."/>
            <person name="Feldblyum T.V."/>
            <person name="Buell C.R."/>
            <person name="Ketchum K.A."/>
            <person name="Lee J.J."/>
            <person name="Ronning C.M."/>
            <person name="Koo H.L."/>
            <person name="Moffat K.S."/>
            <person name="Cronin L.A."/>
            <person name="Shen M."/>
            <person name="Pai G."/>
            <person name="Van Aken S."/>
            <person name="Umayam L."/>
            <person name="Tallon L.J."/>
            <person name="Gill J.E."/>
            <person name="Adams M.D."/>
            <person name="Carrera A.J."/>
            <person name="Creasy T.H."/>
            <person name="Goodman H.M."/>
            <person name="Somerville C.R."/>
            <person name="Copenhaver G.P."/>
            <person name="Preuss D."/>
            <person name="Nierman W.C."/>
            <person name="White O."/>
            <person name="Eisen J.A."/>
            <person name="Salzberg S.L."/>
            <person name="Fraser C.M."/>
            <person name="Venter J.C."/>
        </authorList>
    </citation>
    <scope>NUCLEOTIDE SEQUENCE [LARGE SCALE GENOMIC DNA]</scope>
    <source>
        <strain>cv. Columbia</strain>
    </source>
</reference>
<reference key="2">
    <citation type="journal article" date="2017" name="Plant J.">
        <title>Araport11: a complete reannotation of the Arabidopsis thaliana reference genome.</title>
        <authorList>
            <person name="Cheng C.Y."/>
            <person name="Krishnakumar V."/>
            <person name="Chan A.P."/>
            <person name="Thibaud-Nissen F."/>
            <person name="Schobel S."/>
            <person name="Town C.D."/>
        </authorList>
    </citation>
    <scope>GENOME REANNOTATION</scope>
    <source>
        <strain>cv. Columbia</strain>
    </source>
</reference>
<reference key="3">
    <citation type="submission" date="2006-07" db="EMBL/GenBank/DDBJ databases">
        <title>Large-scale analysis of RIKEN Arabidopsis full-length (RAFL) cDNAs.</title>
        <authorList>
            <person name="Totoki Y."/>
            <person name="Seki M."/>
            <person name="Ishida J."/>
            <person name="Nakajima M."/>
            <person name="Enju A."/>
            <person name="Kamiya A."/>
            <person name="Narusaka M."/>
            <person name="Shin-i T."/>
            <person name="Nakagawa M."/>
            <person name="Sakamoto N."/>
            <person name="Oishi K."/>
            <person name="Kohara Y."/>
            <person name="Kobayashi M."/>
            <person name="Toyoda A."/>
            <person name="Sakaki Y."/>
            <person name="Sakurai T."/>
            <person name="Iida K."/>
            <person name="Akiyama K."/>
            <person name="Satou M."/>
            <person name="Toyoda T."/>
            <person name="Konagaya A."/>
            <person name="Carninci P."/>
            <person name="Kawai J."/>
            <person name="Hayashizaki Y."/>
            <person name="Shinozaki K."/>
        </authorList>
    </citation>
    <scope>NUCLEOTIDE SEQUENCE [LARGE SCALE MRNA]</scope>
    <source>
        <strain>cv. Columbia</strain>
    </source>
</reference>
<reference key="4">
    <citation type="journal article" date="2001" name="Proc. Natl. Acad. Sci. U.S.A.">
        <title>Regulation of plant growth by cytokinin.</title>
        <authorList>
            <person name="Werner T."/>
            <person name="Motyka V."/>
            <person name="Strnad M."/>
            <person name="Schmuelling T."/>
        </authorList>
    </citation>
    <scope>FUNCTION</scope>
</reference>
<reference key="5">
    <citation type="journal article" date="2003" name="Plant Cell">
        <title>Cytokinin-deficient transgenic Arabidopsis plants show multiple developmental alterations indicating opposite functions of cytokinins in the regulation of shoot and root meristem activity.</title>
        <authorList>
            <person name="Werner T."/>
            <person name="Motyka V."/>
            <person name="Laucou V."/>
            <person name="Smets R."/>
            <person name="Van Onckelen H."/>
            <person name="Schmulling T."/>
        </authorList>
    </citation>
    <scope>FUNCTION</scope>
    <scope>BIOPHYSICOCHEMICAL PROPERTIES</scope>
    <scope>SUBCELLULAR LOCATION</scope>
    <scope>TISSUE SPECIFICITY</scope>
</reference>
<reference key="6">
    <citation type="journal article" date="2003" name="J. Plant Res.">
        <title>Structure and function of cytokinin oxidase/dehydrogenase genes of maize, rice, Arabidopsis and other species.</title>
        <authorList>
            <person name="Schmuelling T."/>
            <person name="Werner T."/>
            <person name="Riefler M."/>
            <person name="Krupkova E."/>
            <person name="Bartrina y Manns I."/>
        </authorList>
    </citation>
    <scope>REVIEW</scope>
    <scope>NOMENCLATURE</scope>
</reference>
<reference key="7">
    <citation type="journal article" date="2010" name="Phytochemistry">
        <title>Vacuolar and cytosolic cytokinin dehydrogenases of Arabidopsis thaliana: heterologous expression, purification and properties.</title>
        <authorList>
            <person name="Kowalska M."/>
            <person name="Galuszka P."/>
            <person name="Frebortova J."/>
            <person name="Sebela M."/>
            <person name="Beres T."/>
            <person name="Hluska T."/>
            <person name="Smehilova M."/>
            <person name="Bilyeu K.D."/>
            <person name="Frebort I."/>
        </authorList>
    </citation>
    <scope>FUNCTION</scope>
    <scope>CATALYTIC ACTIVITY</scope>
</reference>
<reference key="8">
    <citation type="journal article" date="2021" name="J. Exp. Bot.">
        <title>Jasmonate inhibits adventitious root initiation through repression of CKX1 and activation of RAP2.6L transcription factor in Arabidopsis.</title>
        <authorList>
            <person name="Dob A."/>
            <person name="Lakehal A."/>
            <person name="Novak O."/>
            <person name="Bellini C."/>
        </authorList>
    </citation>
    <scope>FUNCTION</scope>
    <scope>INDUCTION</scope>
</reference>
<reference key="9">
    <citation type="journal article" date="2022" name="Plant Sci.">
        <title>Cytokinin regulates female gametophyte development by cell cycle modulation in Arabidopsis thaliana.</title>
        <authorList>
            <person name="Zhang J."/>
            <person name="Pai Q."/>
            <person name="Yue L."/>
            <person name="Wu X."/>
            <person name="Liu H."/>
            <person name="Wang W."/>
        </authorList>
    </citation>
    <scope>FUNCTION</scope>
</reference>
<comment type="function">
    <text evidence="5 6 7 8 9">Catalyzes the oxidation of cytokinins, a family of N(6)-substituted adenine derivatives that are plant hormones, where the substituent is an isopentenyl group (PubMed:11504909, PubMed:14555694). Catalyzes in vitro the oxidation of various types of cytokinin nucleotides that are known as direct products of cytokinin biosynthesis (PubMed:20825956). Promotes adventitious root initiation downstream of MYC2-dependent jasmonate signaling (PubMed:34329421). Cytokinin degraded by CKX1 is required for cell division in the female gametophyte by modulating the expression of cell cycle genes (PubMed:35995110).</text>
</comment>
<comment type="catalytic activity">
    <reaction evidence="7">
        <text>N(6)-dimethylallyladenine + A + H2O = 3-methyl-2-butenal + adenine + AH2</text>
        <dbReference type="Rhea" id="RHEA:13625"/>
        <dbReference type="ChEBI" id="CHEBI:13193"/>
        <dbReference type="ChEBI" id="CHEBI:15377"/>
        <dbReference type="ChEBI" id="CHEBI:15825"/>
        <dbReference type="ChEBI" id="CHEBI:16708"/>
        <dbReference type="ChEBI" id="CHEBI:17499"/>
        <dbReference type="ChEBI" id="CHEBI:17660"/>
        <dbReference type="EC" id="1.5.99.12"/>
    </reaction>
</comment>
<comment type="cofactor">
    <cofactor evidence="1">
        <name>FAD</name>
        <dbReference type="ChEBI" id="CHEBI:57692"/>
    </cofactor>
</comment>
<comment type="biophysicochemical properties">
    <kinetics>
        <KM evidence="6">0.5 uM for isopentenyladenine</KM>
        <Vmax evidence="6">0.1 nmol/h/mg enzyme</Vmax>
    </kinetics>
</comment>
<comment type="subcellular location">
    <subcellularLocation>
        <location evidence="6">Vacuole</location>
    </subcellularLocation>
</comment>
<comment type="tissue specificity">
    <text evidence="6">Expressed in shoot apexes, lateral shoot meristems, growing tissues of young flowers, and weakly at the root-hypocotyl junction.</text>
</comment>
<comment type="induction">
    <text evidence="8">Down-regulated by jasmonate.</text>
</comment>
<comment type="miscellaneous">
    <text>The enzymatic activity is significantly greater under acidic conditions in vitro.</text>
</comment>
<comment type="similarity">
    <text evidence="10">Belongs to the oxygen-dependent FAD-linked oxidoreductase family.</text>
</comment>
<comment type="sequence caution" evidence="10">
    <conflict type="frameshift">
        <sequence resource="EMBL" id="AK226615"/>
    </conflict>
</comment>
<gene>
    <name type="primary">CKX1</name>
    <name type="ordered locus">At2g41510</name>
    <name type="ORF">T32G6.3</name>
</gene>
<name>CKX1_ARATH</name>